<evidence type="ECO:0000250" key="1"/>
<evidence type="ECO:0000250" key="2">
    <source>
        <dbReference type="UniProtKB" id="P61372"/>
    </source>
</evidence>
<evidence type="ECO:0000250" key="3">
    <source>
        <dbReference type="UniProtKB" id="P61374"/>
    </source>
</evidence>
<evidence type="ECO:0000255" key="4">
    <source>
        <dbReference type="PROSITE-ProRule" id="PRU00108"/>
    </source>
</evidence>
<evidence type="ECO:0000255" key="5">
    <source>
        <dbReference type="PROSITE-ProRule" id="PRU00125"/>
    </source>
</evidence>
<evidence type="ECO:0000256" key="6">
    <source>
        <dbReference type="SAM" id="MobiDB-lite"/>
    </source>
</evidence>
<evidence type="ECO:0000269" key="7">
    <source>
    </source>
</evidence>
<organism>
    <name type="scientific">Mesocricetus auratus</name>
    <name type="common">Golden hamster</name>
    <dbReference type="NCBI Taxonomy" id="10036"/>
    <lineage>
        <taxon>Eukaryota</taxon>
        <taxon>Metazoa</taxon>
        <taxon>Chordata</taxon>
        <taxon>Craniata</taxon>
        <taxon>Vertebrata</taxon>
        <taxon>Euteleostomi</taxon>
        <taxon>Mammalia</taxon>
        <taxon>Eutheria</taxon>
        <taxon>Euarchontoglires</taxon>
        <taxon>Glires</taxon>
        <taxon>Rodentia</taxon>
        <taxon>Myomorpha</taxon>
        <taxon>Muroidea</taxon>
        <taxon>Cricetidae</taxon>
        <taxon>Cricetinae</taxon>
        <taxon>Mesocricetus</taxon>
    </lineage>
</organism>
<comment type="function">
    <text evidence="2 3">DNA-binding transcriptional activator. Recognizes and binds to the consensus octamer binding site 5'-ATAATTAA-3' in promoter of target genes. Plays a fundamental role in the gene regulatory network essential for retinal ganglion cell (RGC) differentiation. Cooperates with the transcription factor POU4F2 to achieve maximal levels of expression of RGC target genes and RGC fate specification in the developing retina. Involved in the specification of motor neurons in cooperation with LHX3 and LDB1 (By similarity). Binds to insulin gene enhancer sequences (By similarity). Essential for heart development. Marker of one progenitor cell population that give rise to the outflow tract, right ventricle, a subset of left ventricular cells, and a large number of atrial cells as well, its function is required for these progenitors to contribute to the heart. Controls the expression of FGF and BMP growth factors in this cell population and is required for proliferation and survival of cells within pharyngeal foregut endoderm and adjacent splanchnic mesoderm as well as for migration of cardiac progenitors into the heart (By similarity).</text>
</comment>
<comment type="subunit">
    <text evidence="2">At neuronal promoters, displaces LDB1 from LHX3 LIM domain to form a ternary complex in which ISL1 contacts both LHX3 and LDB1; allosteric structural changes in the DNA binding domain of LHX3, induced by the ISL1:LHX3 interaction, may explain differences in sequence specificity of the different complexes. Interacts with LHX3. Interacts (via C-terminus) with POU4F2 (via C-terminus) isoform 1. Interacts with POU3F2. Interacts with POU4F3. Interacts (via N-terminal domain) with MLIP; the interaction represses ISL1 transactivator activity. Interacts with GCN5/KAT2A. Interactions of ISL1 with MLIP1 or KAT2A may be mutually exclusive (By similarity).</text>
</comment>
<comment type="subcellular location">
    <subcellularLocation>
        <location evidence="2">Nucleus</location>
    </subcellularLocation>
</comment>
<comment type="tissue specificity">
    <text evidence="7">Expressed in fibroblast.</text>
</comment>
<comment type="PTM">
    <text evidence="2">Ubiquitinated probably by WWP1 E3 ubiquitin ligase; ubiquitination is followed by protein degradation.</text>
</comment>
<comment type="PTM">
    <text evidence="2">Phosphorylated.</text>
</comment>
<accession>P61373</accession>
<accession>P20663</accession>
<accession>P47894</accession>
<reference key="1">
    <citation type="journal article" date="1994" name="Endocrinology">
        <title>The LIM domain homeobox gene isl-1: conservation of human, hamster, and rat complementary deoxyribonucleic acid sequences and expression in cell types of nonneuroendocrine lineage.</title>
        <authorList>
            <person name="Wang M."/>
            <person name="Drucker D.J."/>
        </authorList>
    </citation>
    <scope>NUCLEOTIDE SEQUENCE [MRNA]</scope>
    <scope>TISSUE SPECIFICITY</scope>
</reference>
<keyword id="KW-0010">Activator</keyword>
<keyword id="KW-0217">Developmental protein</keyword>
<keyword id="KW-0221">Differentiation</keyword>
<keyword id="KW-0238">DNA-binding</keyword>
<keyword id="KW-0371">Homeobox</keyword>
<keyword id="KW-0440">LIM domain</keyword>
<keyword id="KW-0479">Metal-binding</keyword>
<keyword id="KW-0539">Nucleus</keyword>
<keyword id="KW-0597">Phosphoprotein</keyword>
<keyword id="KW-1185">Reference proteome</keyword>
<keyword id="KW-0677">Repeat</keyword>
<keyword id="KW-0804">Transcription</keyword>
<keyword id="KW-0805">Transcription regulation</keyword>
<keyword id="KW-0832">Ubl conjugation</keyword>
<keyword id="KW-0862">Zinc</keyword>
<feature type="chain" id="PRO_0000075747" description="Insulin gene enhancer protein ISL-1">
    <location>
        <begin position="1"/>
        <end position="349"/>
    </location>
</feature>
<feature type="domain" description="LIM zinc-binding 1" evidence="5">
    <location>
        <begin position="17"/>
        <end position="70"/>
    </location>
</feature>
<feature type="domain" description="LIM zinc-binding 2" evidence="5">
    <location>
        <begin position="79"/>
        <end position="133"/>
    </location>
</feature>
<feature type="DNA-binding region" description="Homeobox" evidence="4">
    <location>
        <begin position="181"/>
        <end position="240"/>
    </location>
</feature>
<feature type="region of interest" description="LIM-binding domain (LID)" evidence="1">
    <location>
        <begin position="262"/>
        <end position="291"/>
    </location>
</feature>
<feature type="region of interest" description="Disordered" evidence="6">
    <location>
        <begin position="312"/>
        <end position="349"/>
    </location>
</feature>
<feature type="compositionally biased region" description="Polar residues" evidence="6">
    <location>
        <begin position="321"/>
        <end position="343"/>
    </location>
</feature>
<gene>
    <name type="primary">ISL1</name>
</gene>
<dbReference type="EMBL" id="S70720">
    <property type="protein sequence ID" value="AAP20776.1"/>
    <property type="molecule type" value="mRNA"/>
</dbReference>
<dbReference type="RefSeq" id="XP_005082833.1">
    <property type="nucleotide sequence ID" value="XM_005082776.2"/>
</dbReference>
<dbReference type="SMR" id="P61373"/>
<dbReference type="STRING" id="10036.ENSMAUP00000008360"/>
<dbReference type="Ensembl" id="ENSMAUT00000012179">
    <property type="protein sequence ID" value="ENSMAUP00000008360"/>
    <property type="gene ID" value="ENSMAUG00000009787"/>
</dbReference>
<dbReference type="GeneID" id="101836649"/>
<dbReference type="KEGG" id="maua:101836649"/>
<dbReference type="CTD" id="3670"/>
<dbReference type="eggNOG" id="KOG0490">
    <property type="taxonomic scope" value="Eukaryota"/>
</dbReference>
<dbReference type="OrthoDB" id="125004at2759"/>
<dbReference type="Proteomes" id="UP000189706">
    <property type="component" value="Unplaced"/>
</dbReference>
<dbReference type="GO" id="GO:0000785">
    <property type="term" value="C:chromatin"/>
    <property type="evidence" value="ECO:0007669"/>
    <property type="project" value="Ensembl"/>
</dbReference>
<dbReference type="GO" id="GO:0005634">
    <property type="term" value="C:nucleus"/>
    <property type="evidence" value="ECO:0000250"/>
    <property type="project" value="UniProtKB"/>
</dbReference>
<dbReference type="GO" id="GO:0043425">
    <property type="term" value="F:bHLH transcription factor binding"/>
    <property type="evidence" value="ECO:0007669"/>
    <property type="project" value="Ensembl"/>
</dbReference>
<dbReference type="GO" id="GO:0001228">
    <property type="term" value="F:DNA-binding transcription activator activity, RNA polymerase II-specific"/>
    <property type="evidence" value="ECO:0007669"/>
    <property type="project" value="Ensembl"/>
</dbReference>
<dbReference type="GO" id="GO:0046872">
    <property type="term" value="F:metal ion binding"/>
    <property type="evidence" value="ECO:0007669"/>
    <property type="project" value="UniProtKB-KW"/>
</dbReference>
<dbReference type="GO" id="GO:1990841">
    <property type="term" value="F:promoter-specific chromatin binding"/>
    <property type="evidence" value="ECO:0000250"/>
    <property type="project" value="UniProtKB"/>
</dbReference>
<dbReference type="GO" id="GO:0000978">
    <property type="term" value="F:RNA polymerase II cis-regulatory region sequence-specific DNA binding"/>
    <property type="evidence" value="ECO:0007669"/>
    <property type="project" value="Ensembl"/>
</dbReference>
<dbReference type="GO" id="GO:0061629">
    <property type="term" value="F:RNA polymerase II-specific DNA-binding transcription factor binding"/>
    <property type="evidence" value="ECO:0007669"/>
    <property type="project" value="Ensembl"/>
</dbReference>
<dbReference type="GO" id="GO:0043565">
    <property type="term" value="F:sequence-specific DNA binding"/>
    <property type="evidence" value="ECO:0000250"/>
    <property type="project" value="UniProtKB"/>
</dbReference>
<dbReference type="GO" id="GO:0060413">
    <property type="term" value="P:atrial septum morphogenesis"/>
    <property type="evidence" value="ECO:0007669"/>
    <property type="project" value="Ensembl"/>
</dbReference>
<dbReference type="GO" id="GO:0060070">
    <property type="term" value="P:canonical Wnt signaling pathway"/>
    <property type="evidence" value="ECO:0007669"/>
    <property type="project" value="Ensembl"/>
</dbReference>
<dbReference type="GO" id="GO:0060913">
    <property type="term" value="P:cardiac cell fate determination"/>
    <property type="evidence" value="ECO:0007669"/>
    <property type="project" value="Ensembl"/>
</dbReference>
<dbReference type="GO" id="GO:0060379">
    <property type="term" value="P:cardiac muscle cell myoblast differentiation"/>
    <property type="evidence" value="ECO:0007669"/>
    <property type="project" value="Ensembl"/>
</dbReference>
<dbReference type="GO" id="GO:0003215">
    <property type="term" value="P:cardiac right ventricle morphogenesis"/>
    <property type="evidence" value="ECO:0007669"/>
    <property type="project" value="Ensembl"/>
</dbReference>
<dbReference type="GO" id="GO:0008283">
    <property type="term" value="P:cell population proliferation"/>
    <property type="evidence" value="ECO:0007669"/>
    <property type="project" value="Ensembl"/>
</dbReference>
<dbReference type="GO" id="GO:0003203">
    <property type="term" value="P:endocardial cushion morphogenesis"/>
    <property type="evidence" value="ECO:0007669"/>
    <property type="project" value="Ensembl"/>
</dbReference>
<dbReference type="GO" id="GO:0007507">
    <property type="term" value="P:heart development"/>
    <property type="evidence" value="ECO:0000250"/>
    <property type="project" value="UniProtKB"/>
</dbReference>
<dbReference type="GO" id="GO:0060384">
    <property type="term" value="P:innervation"/>
    <property type="evidence" value="ECO:0007669"/>
    <property type="project" value="Ensembl"/>
</dbReference>
<dbReference type="GO" id="GO:0090090">
    <property type="term" value="P:negative regulation of canonical Wnt signaling pathway"/>
    <property type="evidence" value="ECO:0007669"/>
    <property type="project" value="Ensembl"/>
</dbReference>
<dbReference type="GO" id="GO:0050728">
    <property type="term" value="P:negative regulation of inflammatory response"/>
    <property type="evidence" value="ECO:0007669"/>
    <property type="project" value="Ensembl"/>
</dbReference>
<dbReference type="GO" id="GO:0043524">
    <property type="term" value="P:negative regulation of neuron apoptotic process"/>
    <property type="evidence" value="ECO:0007669"/>
    <property type="project" value="Ensembl"/>
</dbReference>
<dbReference type="GO" id="GO:0045665">
    <property type="term" value="P:negative regulation of neuron differentiation"/>
    <property type="evidence" value="ECO:0007669"/>
    <property type="project" value="Ensembl"/>
</dbReference>
<dbReference type="GO" id="GO:0000122">
    <property type="term" value="P:negative regulation of transcription by RNA polymerase II"/>
    <property type="evidence" value="ECO:0007669"/>
    <property type="project" value="Ensembl"/>
</dbReference>
<dbReference type="GO" id="GO:0001755">
    <property type="term" value="P:neural crest cell migration"/>
    <property type="evidence" value="ECO:0007669"/>
    <property type="project" value="Ensembl"/>
</dbReference>
<dbReference type="GO" id="GO:0003148">
    <property type="term" value="P:outflow tract septum morphogenesis"/>
    <property type="evidence" value="ECO:0007669"/>
    <property type="project" value="Ensembl"/>
</dbReference>
<dbReference type="GO" id="GO:0031016">
    <property type="term" value="P:pancreas development"/>
    <property type="evidence" value="ECO:0007669"/>
    <property type="project" value="Ensembl"/>
</dbReference>
<dbReference type="GO" id="GO:0048936">
    <property type="term" value="P:peripheral nervous system neuron axonogenesis"/>
    <property type="evidence" value="ECO:0007669"/>
    <property type="project" value="Ensembl"/>
</dbReference>
<dbReference type="GO" id="GO:0060037">
    <property type="term" value="P:pharyngeal system development"/>
    <property type="evidence" value="ECO:0007669"/>
    <property type="project" value="Ensembl"/>
</dbReference>
<dbReference type="GO" id="GO:0021983">
    <property type="term" value="P:pituitary gland development"/>
    <property type="evidence" value="ECO:0007669"/>
    <property type="project" value="Ensembl"/>
</dbReference>
<dbReference type="GO" id="GO:0045766">
    <property type="term" value="P:positive regulation of angiogenesis"/>
    <property type="evidence" value="ECO:0007669"/>
    <property type="project" value="Ensembl"/>
</dbReference>
<dbReference type="GO" id="GO:0045597">
    <property type="term" value="P:positive regulation of cell differentiation"/>
    <property type="evidence" value="ECO:0000250"/>
    <property type="project" value="UniProtKB"/>
</dbReference>
<dbReference type="GO" id="GO:0008284">
    <property type="term" value="P:positive regulation of cell population proliferation"/>
    <property type="evidence" value="ECO:0007669"/>
    <property type="project" value="Ensembl"/>
</dbReference>
<dbReference type="GO" id="GO:0071657">
    <property type="term" value="P:positive regulation of granulocyte colony-stimulating factor production"/>
    <property type="evidence" value="ECO:0007669"/>
    <property type="project" value="Ensembl"/>
</dbReference>
<dbReference type="GO" id="GO:0032725">
    <property type="term" value="P:positive regulation of granulocyte macrophage colony-stimulating factor production"/>
    <property type="evidence" value="ECO:0007669"/>
    <property type="project" value="Ensembl"/>
</dbReference>
<dbReference type="GO" id="GO:0032024">
    <property type="term" value="P:positive regulation of insulin secretion"/>
    <property type="evidence" value="ECO:0007669"/>
    <property type="project" value="Ensembl"/>
</dbReference>
<dbReference type="GO" id="GO:0032730">
    <property type="term" value="P:positive regulation of interleukin-1 alpha production"/>
    <property type="evidence" value="ECO:0007669"/>
    <property type="project" value="Ensembl"/>
</dbReference>
<dbReference type="GO" id="GO:0032731">
    <property type="term" value="P:positive regulation of interleukin-1 beta production"/>
    <property type="evidence" value="ECO:0007669"/>
    <property type="project" value="Ensembl"/>
</dbReference>
<dbReference type="GO" id="GO:0032735">
    <property type="term" value="P:positive regulation of interleukin-12 production"/>
    <property type="evidence" value="ECO:0007669"/>
    <property type="project" value="Ensembl"/>
</dbReference>
<dbReference type="GO" id="GO:0032755">
    <property type="term" value="P:positive regulation of interleukin-6 production"/>
    <property type="evidence" value="ECO:0007669"/>
    <property type="project" value="Ensembl"/>
</dbReference>
<dbReference type="GO" id="GO:0045944">
    <property type="term" value="P:positive regulation of transcription by RNA polymerase II"/>
    <property type="evidence" value="ECO:0000250"/>
    <property type="project" value="UniProtKB"/>
</dbReference>
<dbReference type="GO" id="GO:0032760">
    <property type="term" value="P:positive regulation of tumor necrosis factor production"/>
    <property type="evidence" value="ECO:0007669"/>
    <property type="project" value="Ensembl"/>
</dbReference>
<dbReference type="GO" id="GO:0032729">
    <property type="term" value="P:positive regulation of type II interferon production"/>
    <property type="evidence" value="ECO:0007669"/>
    <property type="project" value="Ensembl"/>
</dbReference>
<dbReference type="GO" id="GO:0010575">
    <property type="term" value="P:positive regulation of vascular endothelial growth factor production"/>
    <property type="evidence" value="ECO:0007669"/>
    <property type="project" value="Ensembl"/>
</dbReference>
<dbReference type="GO" id="GO:0086091">
    <property type="term" value="P:regulation of heart rate by cardiac conduction"/>
    <property type="evidence" value="ECO:0007669"/>
    <property type="project" value="Ensembl"/>
</dbReference>
<dbReference type="GO" id="GO:0003266">
    <property type="term" value="P:regulation of secondary heart field cardioblast proliferation"/>
    <property type="evidence" value="ECO:0007669"/>
    <property type="project" value="Ensembl"/>
</dbReference>
<dbReference type="GO" id="GO:0031290">
    <property type="term" value="P:retinal ganglion cell axon guidance"/>
    <property type="evidence" value="ECO:0007669"/>
    <property type="project" value="Ensembl"/>
</dbReference>
<dbReference type="GO" id="GO:0003139">
    <property type="term" value="P:secondary heart field specification"/>
    <property type="evidence" value="ECO:0007669"/>
    <property type="project" value="Ensembl"/>
</dbReference>
<dbReference type="GO" id="GO:0048880">
    <property type="term" value="P:sensory system development"/>
    <property type="evidence" value="ECO:0007669"/>
    <property type="project" value="Ensembl"/>
</dbReference>
<dbReference type="GO" id="GO:0060931">
    <property type="term" value="P:sinoatrial node cell development"/>
    <property type="evidence" value="ECO:0007669"/>
    <property type="project" value="Ensembl"/>
</dbReference>
<dbReference type="GO" id="GO:0021520">
    <property type="term" value="P:spinal cord motor neuron cell fate specification"/>
    <property type="evidence" value="ECO:0007669"/>
    <property type="project" value="Ensembl"/>
</dbReference>
<dbReference type="GO" id="GO:0006366">
    <property type="term" value="P:transcription by RNA polymerase II"/>
    <property type="evidence" value="ECO:0007669"/>
    <property type="project" value="Ensembl"/>
</dbReference>
<dbReference type="GO" id="GO:0021559">
    <property type="term" value="P:trigeminal nerve development"/>
    <property type="evidence" value="ECO:0007669"/>
    <property type="project" value="Ensembl"/>
</dbReference>
<dbReference type="GO" id="GO:0055010">
    <property type="term" value="P:ventricular cardiac muscle tissue morphogenesis"/>
    <property type="evidence" value="ECO:0007669"/>
    <property type="project" value="Ensembl"/>
</dbReference>
<dbReference type="GO" id="GO:0021524">
    <property type="term" value="P:visceral motor neuron differentiation"/>
    <property type="evidence" value="ECO:0007669"/>
    <property type="project" value="Ensembl"/>
</dbReference>
<dbReference type="CDD" id="cd00086">
    <property type="entry name" value="homeodomain"/>
    <property type="match status" value="1"/>
</dbReference>
<dbReference type="CDD" id="cd09366">
    <property type="entry name" value="LIM1_Isl"/>
    <property type="match status" value="1"/>
</dbReference>
<dbReference type="CDD" id="cd09374">
    <property type="entry name" value="LIM2_Isl"/>
    <property type="match status" value="1"/>
</dbReference>
<dbReference type="FunFam" id="2.10.110.10:FF:000034">
    <property type="entry name" value="Insulin gene enhancer protein ISL"/>
    <property type="match status" value="1"/>
</dbReference>
<dbReference type="FunFam" id="1.10.10.60:FF:000041">
    <property type="entry name" value="insulin gene enhancer protein ISL-1"/>
    <property type="match status" value="1"/>
</dbReference>
<dbReference type="FunFam" id="2.10.110.10:FF:000056">
    <property type="entry name" value="insulin gene enhancer protein ISL-1"/>
    <property type="match status" value="1"/>
</dbReference>
<dbReference type="Gene3D" id="2.10.110.10">
    <property type="entry name" value="Cysteine Rich Protein"/>
    <property type="match status" value="2"/>
</dbReference>
<dbReference type="Gene3D" id="1.10.10.60">
    <property type="entry name" value="Homeodomain-like"/>
    <property type="match status" value="1"/>
</dbReference>
<dbReference type="InterPro" id="IPR001356">
    <property type="entry name" value="HD"/>
</dbReference>
<dbReference type="InterPro" id="IPR017970">
    <property type="entry name" value="Homeobox_CS"/>
</dbReference>
<dbReference type="InterPro" id="IPR009057">
    <property type="entry name" value="Homeodomain-like_sf"/>
</dbReference>
<dbReference type="InterPro" id="IPR047169">
    <property type="entry name" value="ISL1/2-like"/>
</dbReference>
<dbReference type="InterPro" id="IPR047244">
    <property type="entry name" value="ISL1/2-like_LIM1"/>
</dbReference>
<dbReference type="InterPro" id="IPR001781">
    <property type="entry name" value="Znf_LIM"/>
</dbReference>
<dbReference type="PANTHER" id="PTHR24204">
    <property type="entry name" value="INSULIN GENE ENHANCER PROTEIN"/>
    <property type="match status" value="1"/>
</dbReference>
<dbReference type="PANTHER" id="PTHR24204:SF4">
    <property type="entry name" value="INSULIN GENE ENHANCER PROTEIN ISL-1"/>
    <property type="match status" value="1"/>
</dbReference>
<dbReference type="Pfam" id="PF00046">
    <property type="entry name" value="Homeodomain"/>
    <property type="match status" value="1"/>
</dbReference>
<dbReference type="Pfam" id="PF00412">
    <property type="entry name" value="LIM"/>
    <property type="match status" value="2"/>
</dbReference>
<dbReference type="SMART" id="SM00389">
    <property type="entry name" value="HOX"/>
    <property type="match status" value="1"/>
</dbReference>
<dbReference type="SMART" id="SM00132">
    <property type="entry name" value="LIM"/>
    <property type="match status" value="2"/>
</dbReference>
<dbReference type="SUPFAM" id="SSF57716">
    <property type="entry name" value="Glucocorticoid receptor-like (DNA-binding domain)"/>
    <property type="match status" value="2"/>
</dbReference>
<dbReference type="SUPFAM" id="SSF46689">
    <property type="entry name" value="Homeodomain-like"/>
    <property type="match status" value="1"/>
</dbReference>
<dbReference type="PROSITE" id="PS00027">
    <property type="entry name" value="HOMEOBOX_1"/>
    <property type="match status" value="1"/>
</dbReference>
<dbReference type="PROSITE" id="PS50071">
    <property type="entry name" value="HOMEOBOX_2"/>
    <property type="match status" value="1"/>
</dbReference>
<dbReference type="PROSITE" id="PS00478">
    <property type="entry name" value="LIM_DOMAIN_1"/>
    <property type="match status" value="2"/>
</dbReference>
<dbReference type="PROSITE" id="PS50023">
    <property type="entry name" value="LIM_DOMAIN_2"/>
    <property type="match status" value="2"/>
</dbReference>
<proteinExistence type="evidence at transcript level"/>
<sequence>MGDMGDPPKKKRLISLCVGCGNQIHDQYILRVSPDLEWHAACLKCAECNQYLDESCTCFVRDGKTYCKRDYIRLYGIKCAKCSIGFSKNDFVMRARSKVYHIECFRCVACSRQLIPGDEFALREDGLFCRADHDVVERASLGAGDPLSPLHPARPLQMAAEPISARQPALRPHVHKQPEKTTRVRTVLNEKQLHTLRTCYAANPRPDALMKEQLVEMTGLSPRVIRVWFQNKRCKDKKRSIMMKQLQQQQPNDKTNIQGMTGTPMVAASPERHDGGLQANPVEVQSYQPPWKVLSDFALQSDIDQPAFQQLVNFSEGGPGSNSTGSEVASMSSQLPDTPNSMVASPIEA</sequence>
<name>ISL1_MESAU</name>
<protein>
    <recommendedName>
        <fullName>Insulin gene enhancer protein ISL-1</fullName>
        <shortName>Islet-1</shortName>
    </recommendedName>
</protein>